<gene>
    <name evidence="9" type="primary">HEXD</name>
    <name evidence="9" type="synonym">HEXDC</name>
</gene>
<comment type="function">
    <text evidence="4 5 6">Has hexosaminidase activity. Responsible for the cleavage of the monosaccharides N-acetylglucosamine (GlcNAc) and N-acetylgalactosamine (GalNAc) from cellular substrates. Has a preference for galactosaminide over glucosaminide substrates (PubMed:27149221).</text>
</comment>
<comment type="catalytic activity">
    <reaction evidence="5 6">
        <text>Hydrolysis of terminal non-reducing N-acetyl-D-hexosamine residues in N-acetyl-beta-D-hexosaminides.</text>
        <dbReference type="EC" id="3.2.1.52"/>
    </reaction>
</comment>
<comment type="activity regulation">
    <text evidence="2 6">Inhibited by O-(2-acetamido-2-deoxy-D-glucopyranosylidene)amino N-phenylcarbamate (PUGNAc) (By similarity). Inhibited by galacto-NAG-thiazoline (PubMed:27149221).</text>
</comment>
<comment type="biophysicochemical properties">
    <kinetics>
        <KM evidence="6">0.0721 mM for 4-nitrophenyl N-acetylgalactosamine (PNP-GalNAc)</KM>
        <KM evidence="6">0.607 mM for 4-nitrophenyl-N-acetylglucosamine (PNP-GlcNAc)</KM>
        <KM evidence="6">0.172 mM for 3-fluoro-4-nitrophenyl-N-acetylgalactosamine (3F4NP-GalNAc)</KM>
        <KM evidence="6">0.852 mM for 3-fluoro-4-nitrophenyl-N-acetylglucosamine (3F4NP-GlcNAc)</KM>
        <text evidence="6">kcat is 79.3 min(-1), 30.4 min(-1), 122 min(-1) and 92.4 min(-1) for PNP-GalNAc, PNP-GlcNAc, 3F4NP-GalNAc and 3F4NP-GlcNAc, respectively.</text>
    </kinetics>
    <phDependence>
        <text evidence="6">Optimum pH is 6.7.</text>
    </phDependence>
</comment>
<comment type="subunit">
    <text evidence="2">Homodimer; disulfide-linked.</text>
</comment>
<comment type="subcellular location">
    <subcellularLocation>
        <location evidence="2">Cytoplasm</location>
    </subcellularLocation>
    <subcellularLocation>
        <location evidence="2">Nucleus</location>
    </subcellularLocation>
    <subcellularLocation>
        <location evidence="5">Extracellular vesicle</location>
    </subcellularLocation>
</comment>
<comment type="alternative products">
    <event type="alternative splicing"/>
    <isoform>
        <id>Q8WVB3-1</id>
        <name>1</name>
        <sequence type="displayed"/>
    </isoform>
    <isoform>
        <id>Q8WVB3-2</id>
        <name>2</name>
        <sequence type="described" ref="VSP_030777"/>
    </isoform>
</comment>
<comment type="tissue specificity">
    <text evidence="5">Expressed in synovial fibroblasts and synovial membranes.</text>
</comment>
<comment type="induction">
    <text evidence="5">Expression is inhibited by TGFB1.</text>
</comment>
<comment type="similarity">
    <text evidence="8">Belongs to the glycosyl hydrolase 20 family.</text>
</comment>
<comment type="sequence caution" evidence="8">
    <conflict type="erroneous initiation">
        <sequence resource="EMBL-CDS" id="AAH18205"/>
    </conflict>
    <text>Truncated N-terminus.</text>
</comment>
<comment type="sequence caution" evidence="8">
    <conflict type="erroneous initiation">
        <sequence resource="EMBL-CDS" id="AAH35561"/>
    </conflict>
    <text>Truncated N-terminus.</text>
</comment>
<comment type="sequence caution" evidence="8">
    <conflict type="erroneous initiation">
        <sequence resource="EMBL-CDS" id="BAB85072"/>
    </conflict>
    <text>Truncated N-terminus.</text>
</comment>
<accession>Q8WVB3</accession>
<accession>B7UUP6</accession>
<accession>Q8IYN4</accession>
<accession>Q8TE81</accession>
<reference key="1">
    <citation type="journal article" date="2009" name="Biochem. J.">
        <title>Mammalian cells contain a second nucleocytoplasmic hexosaminidase.</title>
        <authorList>
            <person name="Gutternigg M."/>
            <person name="Rendic D."/>
            <person name="Voglauer R."/>
            <person name="Iskratsch T."/>
            <person name="Wilson I.B."/>
        </authorList>
    </citation>
    <scope>NUCLEOTIDE SEQUENCE [MRNA] (ISOFORM 1)</scope>
    <scope>FUNCTION</scope>
</reference>
<reference key="2">
    <citation type="journal article" date="2006" name="Nature">
        <title>DNA sequence of human chromosome 17 and analysis of rearrangement in the human lineage.</title>
        <authorList>
            <person name="Zody M.C."/>
            <person name="Garber M."/>
            <person name="Adams D.J."/>
            <person name="Sharpe T."/>
            <person name="Harrow J."/>
            <person name="Lupski J.R."/>
            <person name="Nicholson C."/>
            <person name="Searle S.M."/>
            <person name="Wilming L."/>
            <person name="Young S.K."/>
            <person name="Abouelleil A."/>
            <person name="Allen N.R."/>
            <person name="Bi W."/>
            <person name="Bloom T."/>
            <person name="Borowsky M.L."/>
            <person name="Bugalter B.E."/>
            <person name="Butler J."/>
            <person name="Chang J.L."/>
            <person name="Chen C.-K."/>
            <person name="Cook A."/>
            <person name="Corum B."/>
            <person name="Cuomo C.A."/>
            <person name="de Jong P.J."/>
            <person name="DeCaprio D."/>
            <person name="Dewar K."/>
            <person name="FitzGerald M."/>
            <person name="Gilbert J."/>
            <person name="Gibson R."/>
            <person name="Gnerre S."/>
            <person name="Goldstein S."/>
            <person name="Grafham D.V."/>
            <person name="Grocock R."/>
            <person name="Hafez N."/>
            <person name="Hagopian D.S."/>
            <person name="Hart E."/>
            <person name="Norman C.H."/>
            <person name="Humphray S."/>
            <person name="Jaffe D.B."/>
            <person name="Jones M."/>
            <person name="Kamal M."/>
            <person name="Khodiyar V.K."/>
            <person name="LaButti K."/>
            <person name="Laird G."/>
            <person name="Lehoczky J."/>
            <person name="Liu X."/>
            <person name="Lokyitsang T."/>
            <person name="Loveland J."/>
            <person name="Lui A."/>
            <person name="Macdonald P."/>
            <person name="Major J.E."/>
            <person name="Matthews L."/>
            <person name="Mauceli E."/>
            <person name="McCarroll S.A."/>
            <person name="Mihalev A.H."/>
            <person name="Mudge J."/>
            <person name="Nguyen C."/>
            <person name="Nicol R."/>
            <person name="O'Leary S.B."/>
            <person name="Osoegawa K."/>
            <person name="Schwartz D.C."/>
            <person name="Shaw-Smith C."/>
            <person name="Stankiewicz P."/>
            <person name="Steward C."/>
            <person name="Swarbreck D."/>
            <person name="Venkataraman V."/>
            <person name="Whittaker C.A."/>
            <person name="Yang X."/>
            <person name="Zimmer A.R."/>
            <person name="Bradley A."/>
            <person name="Hubbard T."/>
            <person name="Birren B.W."/>
            <person name="Rogers J."/>
            <person name="Lander E.S."/>
            <person name="Nusbaum C."/>
        </authorList>
    </citation>
    <scope>NUCLEOTIDE SEQUENCE [LARGE SCALE GENOMIC DNA]</scope>
</reference>
<reference key="3">
    <citation type="submission" date="2005-07" db="EMBL/GenBank/DDBJ databases">
        <authorList>
            <person name="Mural R.J."/>
            <person name="Istrail S."/>
            <person name="Sutton G.G."/>
            <person name="Florea L."/>
            <person name="Halpern A.L."/>
            <person name="Mobarry C.M."/>
            <person name="Lippert R."/>
            <person name="Walenz B."/>
            <person name="Shatkay H."/>
            <person name="Dew I."/>
            <person name="Miller J.R."/>
            <person name="Flanigan M.J."/>
            <person name="Edwards N.J."/>
            <person name="Bolanos R."/>
            <person name="Fasulo D."/>
            <person name="Halldorsson B.V."/>
            <person name="Hannenhalli S."/>
            <person name="Turner R."/>
            <person name="Yooseph S."/>
            <person name="Lu F."/>
            <person name="Nusskern D.R."/>
            <person name="Shue B.C."/>
            <person name="Zheng X.H."/>
            <person name="Zhong F."/>
            <person name="Delcher A.L."/>
            <person name="Huson D.H."/>
            <person name="Kravitz S.A."/>
            <person name="Mouchard L."/>
            <person name="Reinert K."/>
            <person name="Remington K.A."/>
            <person name="Clark A.G."/>
            <person name="Waterman M.S."/>
            <person name="Eichler E.E."/>
            <person name="Adams M.D."/>
            <person name="Hunkapiller M.W."/>
            <person name="Myers E.W."/>
            <person name="Venter J.C."/>
        </authorList>
    </citation>
    <scope>NUCLEOTIDE SEQUENCE [LARGE SCALE GENOMIC DNA]</scope>
</reference>
<reference key="4">
    <citation type="journal article" date="2004" name="Genome Res.">
        <title>The status, quality, and expansion of the NIH full-length cDNA project: the Mammalian Gene Collection (MGC).</title>
        <authorList>
            <consortium name="The MGC Project Team"/>
        </authorList>
    </citation>
    <scope>NUCLEOTIDE SEQUENCE [LARGE SCALE MRNA] (ISOFORMS 1 AND 2)</scope>
    <scope>VARIANT TYR-232</scope>
    <source>
        <tissue>Blood</tissue>
        <tissue>Cervix</tissue>
    </source>
</reference>
<reference key="5">
    <citation type="journal article" date="2004" name="Nat. Genet.">
        <title>Complete sequencing and characterization of 21,243 full-length human cDNAs.</title>
        <authorList>
            <person name="Ota T."/>
            <person name="Suzuki Y."/>
            <person name="Nishikawa T."/>
            <person name="Otsuki T."/>
            <person name="Sugiyama T."/>
            <person name="Irie R."/>
            <person name="Wakamatsu A."/>
            <person name="Hayashi K."/>
            <person name="Sato H."/>
            <person name="Nagai K."/>
            <person name="Kimura K."/>
            <person name="Makita H."/>
            <person name="Sekine M."/>
            <person name="Obayashi M."/>
            <person name="Nishi T."/>
            <person name="Shibahara T."/>
            <person name="Tanaka T."/>
            <person name="Ishii S."/>
            <person name="Yamamoto J."/>
            <person name="Saito K."/>
            <person name="Kawai Y."/>
            <person name="Isono Y."/>
            <person name="Nakamura Y."/>
            <person name="Nagahari K."/>
            <person name="Murakami K."/>
            <person name="Yasuda T."/>
            <person name="Iwayanagi T."/>
            <person name="Wagatsuma M."/>
            <person name="Shiratori A."/>
            <person name="Sudo H."/>
            <person name="Hosoiri T."/>
            <person name="Kaku Y."/>
            <person name="Kodaira H."/>
            <person name="Kondo H."/>
            <person name="Sugawara M."/>
            <person name="Takahashi M."/>
            <person name="Kanda K."/>
            <person name="Yokoi T."/>
            <person name="Furuya T."/>
            <person name="Kikkawa E."/>
            <person name="Omura Y."/>
            <person name="Abe K."/>
            <person name="Kamihara K."/>
            <person name="Katsuta N."/>
            <person name="Sato K."/>
            <person name="Tanikawa M."/>
            <person name="Yamazaki M."/>
            <person name="Ninomiya K."/>
            <person name="Ishibashi T."/>
            <person name="Yamashita H."/>
            <person name="Murakawa K."/>
            <person name="Fujimori K."/>
            <person name="Tanai H."/>
            <person name="Kimata M."/>
            <person name="Watanabe M."/>
            <person name="Hiraoka S."/>
            <person name="Chiba Y."/>
            <person name="Ishida S."/>
            <person name="Ono Y."/>
            <person name="Takiguchi S."/>
            <person name="Watanabe S."/>
            <person name="Yosida M."/>
            <person name="Hotuta T."/>
            <person name="Kusano J."/>
            <person name="Kanehori K."/>
            <person name="Takahashi-Fujii A."/>
            <person name="Hara H."/>
            <person name="Tanase T.-O."/>
            <person name="Nomura Y."/>
            <person name="Togiya S."/>
            <person name="Komai F."/>
            <person name="Hara R."/>
            <person name="Takeuchi K."/>
            <person name="Arita M."/>
            <person name="Imose N."/>
            <person name="Musashino K."/>
            <person name="Yuuki H."/>
            <person name="Oshima A."/>
            <person name="Sasaki N."/>
            <person name="Aotsuka S."/>
            <person name="Yoshikawa Y."/>
            <person name="Matsunawa H."/>
            <person name="Ichihara T."/>
            <person name="Shiohata N."/>
            <person name="Sano S."/>
            <person name="Moriya S."/>
            <person name="Momiyama H."/>
            <person name="Satoh N."/>
            <person name="Takami S."/>
            <person name="Terashima Y."/>
            <person name="Suzuki O."/>
            <person name="Nakagawa S."/>
            <person name="Senoh A."/>
            <person name="Mizoguchi H."/>
            <person name="Goto Y."/>
            <person name="Shimizu F."/>
            <person name="Wakebe H."/>
            <person name="Hishigaki H."/>
            <person name="Watanabe T."/>
            <person name="Sugiyama A."/>
            <person name="Takemoto M."/>
            <person name="Kawakami B."/>
            <person name="Yamazaki M."/>
            <person name="Watanabe K."/>
            <person name="Kumagai A."/>
            <person name="Itakura S."/>
            <person name="Fukuzumi Y."/>
            <person name="Fujimori Y."/>
            <person name="Komiyama M."/>
            <person name="Tashiro H."/>
            <person name="Tanigami A."/>
            <person name="Fujiwara T."/>
            <person name="Ono T."/>
            <person name="Yamada K."/>
            <person name="Fujii Y."/>
            <person name="Ozaki K."/>
            <person name="Hirao M."/>
            <person name="Ohmori Y."/>
            <person name="Kawabata A."/>
            <person name="Hikiji T."/>
            <person name="Kobatake N."/>
            <person name="Inagaki H."/>
            <person name="Ikema Y."/>
            <person name="Okamoto S."/>
            <person name="Okitani R."/>
            <person name="Kawakami T."/>
            <person name="Noguchi S."/>
            <person name="Itoh T."/>
            <person name="Shigeta K."/>
            <person name="Senba T."/>
            <person name="Matsumura K."/>
            <person name="Nakajima Y."/>
            <person name="Mizuno T."/>
            <person name="Morinaga M."/>
            <person name="Sasaki M."/>
            <person name="Togashi T."/>
            <person name="Oyama M."/>
            <person name="Hata H."/>
            <person name="Watanabe M."/>
            <person name="Komatsu T."/>
            <person name="Mizushima-Sugano J."/>
            <person name="Satoh T."/>
            <person name="Shirai Y."/>
            <person name="Takahashi Y."/>
            <person name="Nakagawa K."/>
            <person name="Okumura K."/>
            <person name="Nagase T."/>
            <person name="Nomura N."/>
            <person name="Kikuchi H."/>
            <person name="Masuho Y."/>
            <person name="Yamashita R."/>
            <person name="Nakai K."/>
            <person name="Yada T."/>
            <person name="Nakamura Y."/>
            <person name="Ohara O."/>
            <person name="Isogai T."/>
            <person name="Sugano S."/>
        </authorList>
    </citation>
    <scope>NUCLEOTIDE SEQUENCE [LARGE SCALE MRNA] OF 8-486 (ISOFORM 1)</scope>
</reference>
<reference key="6">
    <citation type="journal article" date="2013" name="Immunol. Lett.">
        <title>The recently identified extre D enzyme substantially contributes to the elevated hexosaminidase activity in rheumatoid arthritis.</title>
        <authorList>
            <person name="Pasztoi M."/>
            <person name="Sodar B."/>
            <person name="Misjak P."/>
            <person name="Paloczi K."/>
            <person name="Kittel A."/>
            <person name="Toth K."/>
            <person name="Wellinger K."/>
            <person name="Geher P."/>
            <person name="Nagy G."/>
            <person name="Lakatos T."/>
            <person name="Falus A."/>
            <person name="Buzas E.I."/>
        </authorList>
    </citation>
    <scope>FUNCTION</scope>
    <scope>TISSUE SPECIFICITY</scope>
    <scope>CATALYTIC ACTIVITY</scope>
    <scope>INDUCTION BY TGFB1</scope>
    <scope>SUBCELLULAR LOCATION</scope>
</reference>
<reference key="7">
    <citation type="journal article" date="2016" name="Biochemistry">
        <title>Mechanism of Human Nucleocytoplasmic Hexosaminidase D.</title>
        <authorList>
            <person name="Alteen M.G."/>
            <person name="Oehler V."/>
            <person name="Nemcovicova I."/>
            <person name="Wilson I.B."/>
            <person name="Vocadlo D.J."/>
            <person name="Gloster T.M."/>
        </authorList>
    </citation>
    <scope>FUNCTION</scope>
    <scope>CATALYTIC ACTIVITY</scope>
    <scope>BIOPHYSICOCHEMICAL PROPERTIES</scope>
    <scope>MUTAGENESIS OF HIS-92; ASP-148 AND GLU-149</scope>
</reference>
<proteinExistence type="evidence at protein level"/>
<dbReference type="EC" id="3.2.1.52" evidence="5"/>
<dbReference type="EMBL" id="FM204887">
    <property type="protein sequence ID" value="CAR57925.1"/>
    <property type="molecule type" value="mRNA"/>
</dbReference>
<dbReference type="EMBL" id="AC132938">
    <property type="status" value="NOT_ANNOTATED_CDS"/>
    <property type="molecule type" value="Genomic_DNA"/>
</dbReference>
<dbReference type="EMBL" id="CH471099">
    <property type="protein sequence ID" value="EAW89773.1"/>
    <property type="molecule type" value="Genomic_DNA"/>
</dbReference>
<dbReference type="EMBL" id="BC018205">
    <property type="protein sequence ID" value="AAH18205.2"/>
    <property type="status" value="ALT_INIT"/>
    <property type="molecule type" value="mRNA"/>
</dbReference>
<dbReference type="EMBL" id="BC035561">
    <property type="protein sequence ID" value="AAH35561.1"/>
    <property type="status" value="ALT_INIT"/>
    <property type="molecule type" value="mRNA"/>
</dbReference>
<dbReference type="EMBL" id="AK074405">
    <property type="protein sequence ID" value="BAB85072.1"/>
    <property type="status" value="ALT_INIT"/>
    <property type="molecule type" value="mRNA"/>
</dbReference>
<dbReference type="CCDS" id="CCDS42402.1">
    <molecule id="Q8WVB3-2"/>
</dbReference>
<dbReference type="CCDS" id="CCDS82231.1">
    <molecule id="Q8WVB3-1"/>
</dbReference>
<dbReference type="RefSeq" id="NP_001317471.1">
    <molecule id="Q8WVB3-1"/>
    <property type="nucleotide sequence ID" value="NM_001330542.2"/>
</dbReference>
<dbReference type="RefSeq" id="NP_775891.2">
    <molecule id="Q8WVB3-2"/>
    <property type="nucleotide sequence ID" value="NM_173620.3"/>
</dbReference>
<dbReference type="RefSeq" id="XP_016879974.1">
    <property type="nucleotide sequence ID" value="XM_017024485.1"/>
</dbReference>
<dbReference type="SMR" id="Q8WVB3"/>
<dbReference type="BioGRID" id="129726">
    <property type="interactions" value="19"/>
</dbReference>
<dbReference type="FunCoup" id="Q8WVB3">
    <property type="interactions" value="175"/>
</dbReference>
<dbReference type="IntAct" id="Q8WVB3">
    <property type="interactions" value="10"/>
</dbReference>
<dbReference type="STRING" id="9606.ENSP00000337854"/>
<dbReference type="BindingDB" id="Q8WVB3"/>
<dbReference type="ChEMBL" id="CHEMBL5169180"/>
<dbReference type="CAZy" id="GH20">
    <property type="family name" value="Glycoside Hydrolase Family 20"/>
</dbReference>
<dbReference type="GlyGen" id="Q8WVB3">
    <property type="glycosylation" value="1 site"/>
</dbReference>
<dbReference type="iPTMnet" id="Q8WVB3"/>
<dbReference type="PhosphoSitePlus" id="Q8WVB3"/>
<dbReference type="BioMuta" id="HEXDC"/>
<dbReference type="DMDM" id="167008870"/>
<dbReference type="jPOST" id="Q8WVB3"/>
<dbReference type="MassIVE" id="Q8WVB3"/>
<dbReference type="PaxDb" id="9606-ENSP00000337854"/>
<dbReference type="PeptideAtlas" id="Q8WVB3"/>
<dbReference type="ProteomicsDB" id="74768">
    <molecule id="Q8WVB3-1"/>
</dbReference>
<dbReference type="ProteomicsDB" id="74769">
    <molecule id="Q8WVB3-2"/>
</dbReference>
<dbReference type="Pumba" id="Q8WVB3"/>
<dbReference type="Antibodypedia" id="10115">
    <property type="antibodies" value="78 antibodies from 17 providers"/>
</dbReference>
<dbReference type="DNASU" id="284004"/>
<dbReference type="Ensembl" id="ENST00000327949.15">
    <molecule id="Q8WVB3-1"/>
    <property type="protein sequence ID" value="ENSP00000332634.9"/>
    <property type="gene ID" value="ENSG00000169660.17"/>
</dbReference>
<dbReference type="Ensembl" id="ENST00000337014.10">
    <molecule id="Q8WVB3-2"/>
    <property type="protein sequence ID" value="ENSP00000337854.6"/>
    <property type="gene ID" value="ENSG00000169660.17"/>
</dbReference>
<dbReference type="Ensembl" id="ENST00000644009.1">
    <molecule id="Q8WVB3-1"/>
    <property type="protein sequence ID" value="ENSP00000496193.1"/>
    <property type="gene ID" value="ENSG00000169660.17"/>
</dbReference>
<dbReference type="GeneID" id="284004"/>
<dbReference type="KEGG" id="hsa:284004"/>
<dbReference type="MANE-Select" id="ENST00000327949.15">
    <property type="protein sequence ID" value="ENSP00000332634.9"/>
    <property type="RefSeq nucleotide sequence ID" value="NM_001330542.2"/>
    <property type="RefSeq protein sequence ID" value="NP_001317471.1"/>
</dbReference>
<dbReference type="UCSC" id="uc002kev.5">
    <molecule id="Q8WVB3-1"/>
    <property type="organism name" value="human"/>
</dbReference>
<dbReference type="AGR" id="HGNC:26307"/>
<dbReference type="CTD" id="284004"/>
<dbReference type="DisGeNET" id="284004"/>
<dbReference type="GeneCards" id="HEXD"/>
<dbReference type="HGNC" id="HGNC:26307">
    <property type="gene designation" value="HEXD"/>
</dbReference>
<dbReference type="HPA" id="ENSG00000169660">
    <property type="expression patterns" value="Low tissue specificity"/>
</dbReference>
<dbReference type="MIM" id="616864">
    <property type="type" value="gene"/>
</dbReference>
<dbReference type="neXtProt" id="NX_Q8WVB3"/>
<dbReference type="OpenTargets" id="ENSG00000169660"/>
<dbReference type="PharmGKB" id="PA142671693"/>
<dbReference type="VEuPathDB" id="HostDB:ENSG00000169660"/>
<dbReference type="eggNOG" id="ENOG502QRCP">
    <property type="taxonomic scope" value="Eukaryota"/>
</dbReference>
<dbReference type="GeneTree" id="ENSGT00390000014852"/>
<dbReference type="HOGENOM" id="CLU_019666_1_1_1"/>
<dbReference type="InParanoid" id="Q8WVB3"/>
<dbReference type="OMA" id="TWMNPWQ"/>
<dbReference type="OrthoDB" id="47475at2759"/>
<dbReference type="PAN-GO" id="Q8WVB3">
    <property type="GO annotations" value="1 GO annotation based on evolutionary models"/>
</dbReference>
<dbReference type="PhylomeDB" id="Q8WVB3"/>
<dbReference type="TreeFam" id="TF314313"/>
<dbReference type="PathwayCommons" id="Q8WVB3"/>
<dbReference type="SignaLink" id="Q8WVB3"/>
<dbReference type="BioGRID-ORCS" id="284004">
    <property type="hits" value="12 hits in 1156 CRISPR screens"/>
</dbReference>
<dbReference type="ChiTaRS" id="HEXDC">
    <property type="organism name" value="human"/>
</dbReference>
<dbReference type="GenomeRNAi" id="284004"/>
<dbReference type="Pharos" id="Q8WVB3">
    <property type="development level" value="Tbio"/>
</dbReference>
<dbReference type="PRO" id="PR:Q8WVB3"/>
<dbReference type="Proteomes" id="UP000005640">
    <property type="component" value="Chromosome 17"/>
</dbReference>
<dbReference type="RNAct" id="Q8WVB3">
    <property type="molecule type" value="protein"/>
</dbReference>
<dbReference type="Bgee" id="ENSG00000169660">
    <property type="expression patterns" value="Expressed in right uterine tube and 144 other cell types or tissues"/>
</dbReference>
<dbReference type="ExpressionAtlas" id="Q8WVB3">
    <property type="expression patterns" value="baseline and differential"/>
</dbReference>
<dbReference type="GO" id="GO:0005737">
    <property type="term" value="C:cytoplasm"/>
    <property type="evidence" value="ECO:0007669"/>
    <property type="project" value="UniProtKB-SubCell"/>
</dbReference>
<dbReference type="GO" id="GO:1903561">
    <property type="term" value="C:extracellular vesicle"/>
    <property type="evidence" value="ECO:0000314"/>
    <property type="project" value="UniProtKB"/>
</dbReference>
<dbReference type="GO" id="GO:0005634">
    <property type="term" value="C:nucleus"/>
    <property type="evidence" value="ECO:0007669"/>
    <property type="project" value="UniProtKB-SubCell"/>
</dbReference>
<dbReference type="GO" id="GO:0004563">
    <property type="term" value="F:beta-N-acetylhexosaminidase activity"/>
    <property type="evidence" value="ECO:0000314"/>
    <property type="project" value="UniProtKB"/>
</dbReference>
<dbReference type="GO" id="GO:0015929">
    <property type="term" value="F:hexosaminidase activity"/>
    <property type="evidence" value="ECO:0000314"/>
    <property type="project" value="UniProtKB"/>
</dbReference>
<dbReference type="GO" id="GO:0005975">
    <property type="term" value="P:carbohydrate metabolic process"/>
    <property type="evidence" value="ECO:0007669"/>
    <property type="project" value="InterPro"/>
</dbReference>
<dbReference type="CDD" id="cd06565">
    <property type="entry name" value="GH20_GcnA-like"/>
    <property type="match status" value="1"/>
</dbReference>
<dbReference type="FunFam" id="3.20.20.80:FF:000068">
    <property type="entry name" value="hexosaminidase D isoform X1"/>
    <property type="match status" value="1"/>
</dbReference>
<dbReference type="Gene3D" id="3.20.20.80">
    <property type="entry name" value="Glycosidases"/>
    <property type="match status" value="1"/>
</dbReference>
<dbReference type="InterPro" id="IPR015883">
    <property type="entry name" value="Glyco_hydro_20_cat"/>
</dbReference>
<dbReference type="InterPro" id="IPR017853">
    <property type="entry name" value="Glycoside_hydrolase_SF"/>
</dbReference>
<dbReference type="InterPro" id="IPR038901">
    <property type="entry name" value="HEXDC-like"/>
</dbReference>
<dbReference type="PANTHER" id="PTHR21040">
    <property type="entry name" value="BCDNA.GH04120"/>
    <property type="match status" value="1"/>
</dbReference>
<dbReference type="PANTHER" id="PTHR21040:SF6">
    <property type="entry name" value="HEXOSAMINIDASE D"/>
    <property type="match status" value="1"/>
</dbReference>
<dbReference type="Pfam" id="PF00728">
    <property type="entry name" value="Glyco_hydro_20"/>
    <property type="match status" value="1"/>
</dbReference>
<dbReference type="SUPFAM" id="SSF51445">
    <property type="entry name" value="(Trans)glycosidases"/>
    <property type="match status" value="1"/>
</dbReference>
<sequence>MSGSTPFQMRLVHLDLKGAPPKVSYLSEIFPLFRALGANGLLIEYEDMFPYEGPLRLLRAKYAYSPSEIKEILHLAGLNELEVIPLVQTFGHMEFVLKHTAFAHLREVGSFPCTLNPHEAESLALVGAMIDQVLELHPGAQRLHIGCDEVYYLGEGEASRRWLQQEQNSTGKLCLSHMRAVASGVKARRPSVTPLVWDDMLRDLPEDQLAASGVPQLVEPVLWDYTADLDVHGKVLLMQKYRRCGFPQLWAASAFKGATGPSQAVPPVEHHLRNHVQWLQVAGSGPTDSLQGIILTGWQRYDHYSVLCELLPAGVPSLAACLQLLLRGGFDEDVKAKVENLLGISSLEKTDPVREGAGSFPGSNILALVTQVSLHLRSSVDALLEGNRYVTGWFSPYHRQRKLIHPVMVQHIQPAALSLLAQWSTLVQELEAALQLAFYPDAVEEWLEENVHPSLQRLQALLQDLSEVSAPPLPPTSPGRDVAQDP</sequence>
<keyword id="KW-0025">Alternative splicing</keyword>
<keyword id="KW-0963">Cytoplasm</keyword>
<keyword id="KW-1015">Disulfide bond</keyword>
<keyword id="KW-0326">Glycosidase</keyword>
<keyword id="KW-0378">Hydrolase</keyword>
<keyword id="KW-0539">Nucleus</keyword>
<keyword id="KW-1267">Proteomics identification</keyword>
<keyword id="KW-1185">Reference proteome</keyword>
<evidence type="ECO:0000250" key="1"/>
<evidence type="ECO:0000250" key="2">
    <source>
        <dbReference type="UniProtKB" id="Q3U4H6"/>
    </source>
</evidence>
<evidence type="ECO:0000269" key="3">
    <source>
    </source>
</evidence>
<evidence type="ECO:0000269" key="4">
    <source>
    </source>
</evidence>
<evidence type="ECO:0000269" key="5">
    <source>
    </source>
</evidence>
<evidence type="ECO:0000269" key="6">
    <source>
    </source>
</evidence>
<evidence type="ECO:0000303" key="7">
    <source>
    </source>
</evidence>
<evidence type="ECO:0000305" key="8"/>
<evidence type="ECO:0000312" key="9">
    <source>
        <dbReference type="HGNC" id="HGNC:26307"/>
    </source>
</evidence>
<organism>
    <name type="scientific">Homo sapiens</name>
    <name type="common">Human</name>
    <dbReference type="NCBI Taxonomy" id="9606"/>
    <lineage>
        <taxon>Eukaryota</taxon>
        <taxon>Metazoa</taxon>
        <taxon>Chordata</taxon>
        <taxon>Craniata</taxon>
        <taxon>Vertebrata</taxon>
        <taxon>Euteleostomi</taxon>
        <taxon>Mammalia</taxon>
        <taxon>Eutheria</taxon>
        <taxon>Euarchontoglires</taxon>
        <taxon>Primates</taxon>
        <taxon>Haplorrhini</taxon>
        <taxon>Catarrhini</taxon>
        <taxon>Hominidae</taxon>
        <taxon>Homo</taxon>
    </lineage>
</organism>
<name>HEXD_HUMAN</name>
<feature type="chain" id="PRO_0000316790" description="Hexosaminidase D">
    <location>
        <begin position="1"/>
        <end position="486"/>
    </location>
</feature>
<feature type="active site" description="Proton donor" evidence="1">
    <location>
        <position position="149"/>
    </location>
</feature>
<feature type="splice variant" id="VSP_030777" description="In isoform 2." evidence="7">
    <original>EGAGSFPGSNILALVTQVSLHLRSSVDALLEGNRYVTGWFSPYHRQRKLIHPVMVQHIQPAALSLLAQWSTLVQELEAALQLAFYPDAVEEWLEENVHPSLQRLQALLQDLSEVSAPPLPPTSPGRDVAQDP</original>
    <variation>QAPCSPPCPLLPLPFPRPWRQLFSAGLSAGRGPAPSLAATSLPLSHKSASICAALWMRCWRATGMSLAGSAPTTASGSSSTRSWFSTSSPQRSASWHSGAPSCRSWRLPCSWLSTRMPWRSGWRKTCTPACSGCKLCCRTSARCLPPRCHPPALAGTLLRTPEGRAHARGLLLEAGGALHCQMAWAIRAHVGVVPSGPAVSCPHSVPEGPGQPLGERLENTEGSSTGRPAL</variation>
    <location>
        <begin position="355"/>
        <end position="486"/>
    </location>
</feature>
<feature type="sequence variant" id="VAR_038395" description="In dbSNP:rs4789773.">
    <original>I</original>
    <variation>V</variation>
    <location>
        <position position="145"/>
    </location>
</feature>
<feature type="sequence variant" id="VAR_060726" description="In dbSNP:rs17853433." evidence="3">
    <original>H</original>
    <variation>Y</variation>
    <location>
        <position position="232"/>
    </location>
</feature>
<feature type="mutagenesis site" description="Decreases hexosaminidase activity." evidence="6">
    <original>H</original>
    <variation>A</variation>
    <location>
        <position position="92"/>
    </location>
</feature>
<feature type="mutagenesis site" description="Loss of hexosaminidase activity." evidence="6">
    <original>D</original>
    <variation>A</variation>
    <variation>N</variation>
    <location>
        <position position="148"/>
    </location>
</feature>
<feature type="mutagenesis site" description="Decreases hexosaminidase activity. Optimum pH shifts to 7.5." evidence="6">
    <original>E</original>
    <variation>A</variation>
    <variation>N</variation>
    <location>
        <position position="149"/>
    </location>
</feature>
<protein>
    <recommendedName>
        <fullName evidence="8">Hexosaminidase D</fullName>
        <ecNumber evidence="5">3.2.1.52</ecNumber>
    </recommendedName>
    <alternativeName>
        <fullName>Beta-N-acetylhexosaminidase</fullName>
    </alternativeName>
    <alternativeName>
        <fullName>Beta-hexosaminidase D</fullName>
    </alternativeName>
    <alternativeName>
        <fullName>Hexosaminidase domain-containing protein</fullName>
    </alternativeName>
    <alternativeName>
        <fullName>N-acetyl-beta-galactosaminidase</fullName>
    </alternativeName>
</protein>